<comment type="function">
    <text evidence="1">One of the primary rRNA binding proteins, it binds directly to 16S rRNA where it helps nucleate assembly of the platform of the 30S subunit by binding and bridging several RNA helices of the 16S rRNA.</text>
</comment>
<comment type="function">
    <text evidence="1">Forms an intersubunit bridge (bridge B4) with the 23S rRNA of the 50S subunit in the ribosome.</text>
</comment>
<comment type="subunit">
    <text evidence="1">Part of the 30S ribosomal subunit. Forms a bridge to the 50S subunit in the 70S ribosome, contacting the 23S rRNA.</text>
</comment>
<comment type="similarity">
    <text evidence="1">Belongs to the universal ribosomal protein uS15 family.</text>
</comment>
<reference key="1">
    <citation type="submission" date="2007-08" db="EMBL/GenBank/DDBJ databases">
        <title>Complete sequence of Shewanella sediminis HAW-EB3.</title>
        <authorList>
            <consortium name="US DOE Joint Genome Institute"/>
            <person name="Copeland A."/>
            <person name="Lucas S."/>
            <person name="Lapidus A."/>
            <person name="Barry K."/>
            <person name="Glavina del Rio T."/>
            <person name="Dalin E."/>
            <person name="Tice H."/>
            <person name="Pitluck S."/>
            <person name="Chertkov O."/>
            <person name="Brettin T."/>
            <person name="Bruce D."/>
            <person name="Detter J.C."/>
            <person name="Han C."/>
            <person name="Schmutz J."/>
            <person name="Larimer F."/>
            <person name="Land M."/>
            <person name="Hauser L."/>
            <person name="Kyrpides N."/>
            <person name="Kim E."/>
            <person name="Zhao J.-S."/>
            <person name="Richardson P."/>
        </authorList>
    </citation>
    <scope>NUCLEOTIDE SEQUENCE [LARGE SCALE GENOMIC DNA]</scope>
    <source>
        <strain>HAW-EB3</strain>
    </source>
</reference>
<sequence length="89" mass="10318">MSLNAEQTATILAEFGRSEGDTGSTEVQVALLTAQINHLQGHFKEHKHDHHSRRGLLRMVNTRRKLLAYLKRTENVRYQELIKKLGLRR</sequence>
<feature type="chain" id="PRO_1000086821" description="Small ribosomal subunit protein uS15">
    <location>
        <begin position="1"/>
        <end position="89"/>
    </location>
</feature>
<protein>
    <recommendedName>
        <fullName evidence="1">Small ribosomal subunit protein uS15</fullName>
    </recommendedName>
    <alternativeName>
        <fullName evidence="2">30S ribosomal protein S15</fullName>
    </alternativeName>
</protein>
<keyword id="KW-1185">Reference proteome</keyword>
<keyword id="KW-0687">Ribonucleoprotein</keyword>
<keyword id="KW-0689">Ribosomal protein</keyword>
<keyword id="KW-0694">RNA-binding</keyword>
<keyword id="KW-0699">rRNA-binding</keyword>
<evidence type="ECO:0000255" key="1">
    <source>
        <dbReference type="HAMAP-Rule" id="MF_01343"/>
    </source>
</evidence>
<evidence type="ECO:0000305" key="2"/>
<gene>
    <name evidence="1" type="primary">rpsO</name>
    <name type="ordered locus">Ssed_3386</name>
</gene>
<accession>A8FYR7</accession>
<dbReference type="EMBL" id="CP000821">
    <property type="protein sequence ID" value="ABV37990.1"/>
    <property type="molecule type" value="Genomic_DNA"/>
</dbReference>
<dbReference type="RefSeq" id="WP_012143720.1">
    <property type="nucleotide sequence ID" value="NC_009831.1"/>
</dbReference>
<dbReference type="SMR" id="A8FYR7"/>
<dbReference type="STRING" id="425104.Ssed_3386"/>
<dbReference type="KEGG" id="sse:Ssed_3386"/>
<dbReference type="eggNOG" id="COG0184">
    <property type="taxonomic scope" value="Bacteria"/>
</dbReference>
<dbReference type="HOGENOM" id="CLU_148518_0_0_6"/>
<dbReference type="OrthoDB" id="9799262at2"/>
<dbReference type="Proteomes" id="UP000002015">
    <property type="component" value="Chromosome"/>
</dbReference>
<dbReference type="GO" id="GO:0022627">
    <property type="term" value="C:cytosolic small ribosomal subunit"/>
    <property type="evidence" value="ECO:0007669"/>
    <property type="project" value="TreeGrafter"/>
</dbReference>
<dbReference type="GO" id="GO:0019843">
    <property type="term" value="F:rRNA binding"/>
    <property type="evidence" value="ECO:0007669"/>
    <property type="project" value="UniProtKB-UniRule"/>
</dbReference>
<dbReference type="GO" id="GO:0003735">
    <property type="term" value="F:structural constituent of ribosome"/>
    <property type="evidence" value="ECO:0007669"/>
    <property type="project" value="InterPro"/>
</dbReference>
<dbReference type="GO" id="GO:0006412">
    <property type="term" value="P:translation"/>
    <property type="evidence" value="ECO:0007669"/>
    <property type="project" value="UniProtKB-UniRule"/>
</dbReference>
<dbReference type="CDD" id="cd00353">
    <property type="entry name" value="Ribosomal_S15p_S13e"/>
    <property type="match status" value="1"/>
</dbReference>
<dbReference type="FunFam" id="1.10.287.10:FF:000002">
    <property type="entry name" value="30S ribosomal protein S15"/>
    <property type="match status" value="1"/>
</dbReference>
<dbReference type="Gene3D" id="6.10.250.3130">
    <property type="match status" value="1"/>
</dbReference>
<dbReference type="Gene3D" id="1.10.287.10">
    <property type="entry name" value="S15/NS1, RNA-binding"/>
    <property type="match status" value="1"/>
</dbReference>
<dbReference type="HAMAP" id="MF_01343_B">
    <property type="entry name" value="Ribosomal_uS15_B"/>
    <property type="match status" value="1"/>
</dbReference>
<dbReference type="InterPro" id="IPR000589">
    <property type="entry name" value="Ribosomal_uS15"/>
</dbReference>
<dbReference type="InterPro" id="IPR005290">
    <property type="entry name" value="Ribosomal_uS15_bac-type"/>
</dbReference>
<dbReference type="InterPro" id="IPR009068">
    <property type="entry name" value="uS15_NS1_RNA-bd_sf"/>
</dbReference>
<dbReference type="NCBIfam" id="TIGR00952">
    <property type="entry name" value="S15_bact"/>
    <property type="match status" value="1"/>
</dbReference>
<dbReference type="PANTHER" id="PTHR23321">
    <property type="entry name" value="RIBOSOMAL PROTEIN S15, BACTERIAL AND ORGANELLAR"/>
    <property type="match status" value="1"/>
</dbReference>
<dbReference type="PANTHER" id="PTHR23321:SF26">
    <property type="entry name" value="SMALL RIBOSOMAL SUBUNIT PROTEIN US15M"/>
    <property type="match status" value="1"/>
</dbReference>
<dbReference type="Pfam" id="PF00312">
    <property type="entry name" value="Ribosomal_S15"/>
    <property type="match status" value="1"/>
</dbReference>
<dbReference type="SMART" id="SM01387">
    <property type="entry name" value="Ribosomal_S15"/>
    <property type="match status" value="1"/>
</dbReference>
<dbReference type="SUPFAM" id="SSF47060">
    <property type="entry name" value="S15/NS1 RNA-binding domain"/>
    <property type="match status" value="1"/>
</dbReference>
<dbReference type="PROSITE" id="PS00362">
    <property type="entry name" value="RIBOSOMAL_S15"/>
    <property type="match status" value="1"/>
</dbReference>
<proteinExistence type="inferred from homology"/>
<name>RS15_SHESH</name>
<organism>
    <name type="scientific">Shewanella sediminis (strain HAW-EB3)</name>
    <dbReference type="NCBI Taxonomy" id="425104"/>
    <lineage>
        <taxon>Bacteria</taxon>
        <taxon>Pseudomonadati</taxon>
        <taxon>Pseudomonadota</taxon>
        <taxon>Gammaproteobacteria</taxon>
        <taxon>Alteromonadales</taxon>
        <taxon>Shewanellaceae</taxon>
        <taxon>Shewanella</taxon>
    </lineage>
</organism>